<evidence type="ECO:0000250" key="1"/>
<evidence type="ECO:0000255" key="2"/>
<evidence type="ECO:0000256" key="3">
    <source>
        <dbReference type="SAM" id="MobiDB-lite"/>
    </source>
</evidence>
<evidence type="ECO:0000305" key="4"/>
<comment type="function">
    <text evidence="1">Component of the U1 snRNP particle, which recognizes and binds the 5'-splice site of pre-mRNA. Together with other non-snRNP factors, U1 snRNP forms the spliceosomal commitment complex, that targets pre-mRNA to the splicing pathway (By similarity).</text>
</comment>
<comment type="subunit">
    <text evidence="1">Component of the U1 snRNP particle, a subcomplex of the spliceosome.</text>
</comment>
<comment type="subcellular location">
    <subcellularLocation>
        <location evidence="1">Cytoplasm</location>
    </subcellularLocation>
    <subcellularLocation>
        <location evidence="1">Nucleus</location>
    </subcellularLocation>
</comment>
<comment type="similarity">
    <text evidence="4">Belongs to the SNU71 family.</text>
</comment>
<gene>
    <name type="primary">SNU71</name>
    <name type="ORF">PICST_56888</name>
</gene>
<accession>A3LRM6</accession>
<proteinExistence type="inferred from homology"/>
<keyword id="KW-0175">Coiled coil</keyword>
<keyword id="KW-0963">Cytoplasm</keyword>
<keyword id="KW-0507">mRNA processing</keyword>
<keyword id="KW-0508">mRNA splicing</keyword>
<keyword id="KW-0539">Nucleus</keyword>
<keyword id="KW-1185">Reference proteome</keyword>
<keyword id="KW-0687">Ribonucleoprotein</keyword>
<keyword id="KW-0694">RNA-binding</keyword>
<keyword id="KW-0747">Spliceosome</keyword>
<sequence>MVAILPDSITAETAPYFLPESNNSKLLEFLKPLPFSTIKSQSIPAVVGTQVPVFKSIDVSNLIEKTSNRLIWQTASERRRDDARSTSEELENPENEIEEDPQHFVEIQELLPKSLKDQLSLVVVDNFPNVKQYAIEKIVDSLVDTRKYKWSHVHYEFADNRSVYIRFEHVPDAKWFVDTYSSVLPDILSNKNIKVIHNNHIDEVLDELSDFKADPKSTVNSKVVSKIGSILKNKRNFERISKRSGTEDLDEVLAYYSKYEVDSNDLIDVPTNMREAIVKDIVRFRSKVLLIERDNRKKEIELEREKTKDRLKKLFAGLKETNDDINMDSETTKDLPSNIVNEYDDLSDDEYEELLKTGEKKKLDKLYQDKSHQLQSLETRERLYLTKKLEDLNNYEDDLINNKIKYIEDFKNIEESTNSNNNDISSLVSLYFNNHAQYLKVRNHKRSAEEALDAKDEDDEKKEELSTKSQDFVSLKKAKNTLEKDTEDAVPVADNAESETEPSRIEVDQTSKLQSKIVELVEEYLGIVDEFLVEVINENLNKHNLSAKDELMEELSEVLDDDSANLVNDLWNYVSTIAI</sequence>
<protein>
    <recommendedName>
        <fullName>U1 small nuclear ribonucleoprotein component SNU71</fullName>
    </recommendedName>
</protein>
<reference key="1">
    <citation type="journal article" date="2007" name="Nat. Biotechnol.">
        <title>Genome sequence of the lignocellulose-bioconverting and xylose-fermenting yeast Pichia stipitis.</title>
        <authorList>
            <person name="Jeffries T.W."/>
            <person name="Grigoriev I.V."/>
            <person name="Grimwood J."/>
            <person name="Laplaza J.M."/>
            <person name="Aerts A."/>
            <person name="Salamov A."/>
            <person name="Schmutz J."/>
            <person name="Lindquist E."/>
            <person name="Dehal P."/>
            <person name="Shapiro H."/>
            <person name="Jin Y.-S."/>
            <person name="Passoth V."/>
            <person name="Richardson P.M."/>
        </authorList>
    </citation>
    <scope>NUCLEOTIDE SEQUENCE [LARGE SCALE GENOMIC DNA]</scope>
    <source>
        <strain>ATCC 58785 / CBS 6054 / NBRC 10063 / NRRL Y-11545</strain>
    </source>
</reference>
<feature type="chain" id="PRO_0000333460" description="U1 small nuclear ribonucleoprotein component SNU71">
    <location>
        <begin position="1"/>
        <end position="579"/>
    </location>
</feature>
<feature type="region of interest" description="Disordered" evidence="3">
    <location>
        <begin position="76"/>
        <end position="101"/>
    </location>
</feature>
<feature type="region of interest" description="Disordered" evidence="3">
    <location>
        <begin position="484"/>
        <end position="505"/>
    </location>
</feature>
<feature type="coiled-coil region" evidence="2">
    <location>
        <begin position="292"/>
        <end position="380"/>
    </location>
</feature>
<feature type="compositionally biased region" description="Basic and acidic residues" evidence="3">
    <location>
        <begin position="76"/>
        <end position="87"/>
    </location>
</feature>
<feature type="compositionally biased region" description="Acidic residues" evidence="3">
    <location>
        <begin position="88"/>
        <end position="99"/>
    </location>
</feature>
<dbReference type="EMBL" id="CP000497">
    <property type="protein sequence ID" value="ABN65411.2"/>
    <property type="molecule type" value="Genomic_DNA"/>
</dbReference>
<dbReference type="RefSeq" id="XP_001383440.2">
    <property type="nucleotide sequence ID" value="XM_001383403.1"/>
</dbReference>
<dbReference type="SMR" id="A3LRM6"/>
<dbReference type="FunCoup" id="A3LRM6">
    <property type="interactions" value="167"/>
</dbReference>
<dbReference type="STRING" id="322104.A3LRM6"/>
<dbReference type="GeneID" id="4838042"/>
<dbReference type="KEGG" id="pic:PICST_56888"/>
<dbReference type="eggNOG" id="ENOG502S6GF">
    <property type="taxonomic scope" value="Eukaryota"/>
</dbReference>
<dbReference type="HOGENOM" id="CLU_478950_0_0_1"/>
<dbReference type="InParanoid" id="A3LRM6"/>
<dbReference type="OMA" id="NTITRHY"/>
<dbReference type="OrthoDB" id="6275295at2759"/>
<dbReference type="Proteomes" id="UP000002258">
    <property type="component" value="Chromosome 3"/>
</dbReference>
<dbReference type="GO" id="GO:0005737">
    <property type="term" value="C:cytoplasm"/>
    <property type="evidence" value="ECO:0007669"/>
    <property type="project" value="UniProtKB-SubCell"/>
</dbReference>
<dbReference type="GO" id="GO:0005681">
    <property type="term" value="C:spliceosomal complex"/>
    <property type="evidence" value="ECO:0007669"/>
    <property type="project" value="UniProtKB-KW"/>
</dbReference>
<dbReference type="GO" id="GO:0003723">
    <property type="term" value="F:RNA binding"/>
    <property type="evidence" value="ECO:0007669"/>
    <property type="project" value="UniProtKB-KW"/>
</dbReference>
<dbReference type="GO" id="GO:0006397">
    <property type="term" value="P:mRNA processing"/>
    <property type="evidence" value="ECO:0007669"/>
    <property type="project" value="UniProtKB-KW"/>
</dbReference>
<dbReference type="GO" id="GO:0008380">
    <property type="term" value="P:RNA splicing"/>
    <property type="evidence" value="ECO:0007669"/>
    <property type="project" value="UniProtKB-KW"/>
</dbReference>
<dbReference type="Gene3D" id="1.20.1390.10">
    <property type="entry name" value="PWI domain"/>
    <property type="match status" value="1"/>
</dbReference>
<dbReference type="InterPro" id="IPR002483">
    <property type="entry name" value="PWI_dom"/>
</dbReference>
<dbReference type="Pfam" id="PF01480">
    <property type="entry name" value="PWI"/>
    <property type="match status" value="1"/>
</dbReference>
<name>SNU71_PICST</name>
<organism>
    <name type="scientific">Scheffersomyces stipitis (strain ATCC 58785 / CBS 6054 / NBRC 10063 / NRRL Y-11545)</name>
    <name type="common">Yeast</name>
    <name type="synonym">Pichia stipitis</name>
    <dbReference type="NCBI Taxonomy" id="322104"/>
    <lineage>
        <taxon>Eukaryota</taxon>
        <taxon>Fungi</taxon>
        <taxon>Dikarya</taxon>
        <taxon>Ascomycota</taxon>
        <taxon>Saccharomycotina</taxon>
        <taxon>Pichiomycetes</taxon>
        <taxon>Debaryomycetaceae</taxon>
        <taxon>Scheffersomyces</taxon>
    </lineage>
</organism>